<keyword id="KW-1003">Cell membrane</keyword>
<keyword id="KW-0406">Ion transport</keyword>
<keyword id="KW-0472">Membrane</keyword>
<keyword id="KW-0769">Symport</keyword>
<keyword id="KW-0812">Transmembrane</keyword>
<keyword id="KW-1133">Transmembrane helix</keyword>
<keyword id="KW-0813">Transport</keyword>
<comment type="function">
    <text evidence="1">H(+)-stimulated, divalent metal cation uptake system.</text>
</comment>
<comment type="subcellular location">
    <subcellularLocation>
        <location evidence="1">Cell membrane</location>
        <topology evidence="1">Multi-pass membrane protein</topology>
    </subcellularLocation>
</comment>
<comment type="similarity">
    <text evidence="1">Belongs to the NRAMP family.</text>
</comment>
<feature type="chain" id="PRO_1000024115" description="Divalent metal cation transporter MntH">
    <location>
        <begin position="1"/>
        <end position="450"/>
    </location>
</feature>
<feature type="transmembrane region" description="Helical" evidence="1">
    <location>
        <begin position="34"/>
        <end position="54"/>
    </location>
</feature>
<feature type="transmembrane region" description="Helical" evidence="1">
    <location>
        <begin position="61"/>
        <end position="81"/>
    </location>
</feature>
<feature type="transmembrane region" description="Helical" evidence="1">
    <location>
        <begin position="108"/>
        <end position="128"/>
    </location>
</feature>
<feature type="transmembrane region" description="Helical" evidence="1">
    <location>
        <begin position="141"/>
        <end position="161"/>
    </location>
</feature>
<feature type="transmembrane region" description="Helical" evidence="1">
    <location>
        <begin position="170"/>
        <end position="190"/>
    </location>
</feature>
<feature type="transmembrane region" description="Helical" evidence="1">
    <location>
        <begin position="212"/>
        <end position="232"/>
    </location>
</feature>
<feature type="transmembrane region" description="Helical" evidence="1">
    <location>
        <begin position="263"/>
        <end position="283"/>
    </location>
</feature>
<feature type="transmembrane region" description="Helical" evidence="1">
    <location>
        <begin position="305"/>
        <end position="325"/>
    </location>
</feature>
<feature type="transmembrane region" description="Helical" evidence="1">
    <location>
        <begin position="361"/>
        <end position="381"/>
    </location>
</feature>
<feature type="transmembrane region" description="Helical" evidence="1">
    <location>
        <begin position="383"/>
        <end position="403"/>
    </location>
</feature>
<feature type="transmembrane region" description="Helical" evidence="1">
    <location>
        <begin position="422"/>
        <end position="442"/>
    </location>
</feature>
<accession>Q2YX69</accession>
<name>MNTH_STAAB</name>
<sequence>MNNKRHSTNEQLSLDEINNTIKFDHRSSNKQKFLSFLGPGLLVAVGYMDPGNWITSMQGGAQYGYTLLFVILISSLSAMLLQSMTVRLGIATGMDLAQMTRHYLSRPIAIIFWIIAELAIIATDIAEVIGSAIALNLLFNIPLIVGALITVLDVFLLLFIMKYGFRKIEAIVGTLIFTVLFIFIFEVYISSPQLNAVLNGFIPHSEIITNNGILYIALGIIGATIMPHNLYLHSSIVQSRTYSRHNNEEKSQAIKFATIDSNIQLSIAFVVNCLLLVLGASLFFNSNADDLGGFYDLYHALKTEPVLGATMGAIMSTLFAVALLASGQNSTITGTLAGQIVMEGFLRLHIPNWLRRLITRSLAVIPVIVCLSIFKGNAAKIEQLLVFSQVFLSIALPFCLIPLQLATSNKDLMGPFYNKTWVNIISWTLIIILSILNVYLIVQTFQELQG</sequence>
<evidence type="ECO:0000255" key="1">
    <source>
        <dbReference type="HAMAP-Rule" id="MF_00221"/>
    </source>
</evidence>
<proteinExistence type="inferred from homology"/>
<gene>
    <name evidence="1" type="primary">mntH</name>
    <name type="ordered locus">SAB0971c</name>
</gene>
<dbReference type="EMBL" id="AJ938182">
    <property type="protein sequence ID" value="CAI80659.1"/>
    <property type="molecule type" value="Genomic_DNA"/>
</dbReference>
<dbReference type="RefSeq" id="WP_001060846.1">
    <property type="nucleotide sequence ID" value="NC_007622.1"/>
</dbReference>
<dbReference type="SMR" id="Q2YX69"/>
<dbReference type="KEGG" id="sab:SAB0971c"/>
<dbReference type="HOGENOM" id="CLU_020088_2_0_9"/>
<dbReference type="GO" id="GO:0005886">
    <property type="term" value="C:plasma membrane"/>
    <property type="evidence" value="ECO:0007669"/>
    <property type="project" value="UniProtKB-SubCell"/>
</dbReference>
<dbReference type="GO" id="GO:0015086">
    <property type="term" value="F:cadmium ion transmembrane transporter activity"/>
    <property type="evidence" value="ECO:0007669"/>
    <property type="project" value="TreeGrafter"/>
</dbReference>
<dbReference type="GO" id="GO:0005384">
    <property type="term" value="F:manganese ion transmembrane transporter activity"/>
    <property type="evidence" value="ECO:0007669"/>
    <property type="project" value="TreeGrafter"/>
</dbReference>
<dbReference type="GO" id="GO:0046872">
    <property type="term" value="F:metal ion binding"/>
    <property type="evidence" value="ECO:0007669"/>
    <property type="project" value="UniProtKB-UniRule"/>
</dbReference>
<dbReference type="GO" id="GO:0015293">
    <property type="term" value="F:symporter activity"/>
    <property type="evidence" value="ECO:0007669"/>
    <property type="project" value="UniProtKB-UniRule"/>
</dbReference>
<dbReference type="GO" id="GO:0034755">
    <property type="term" value="P:iron ion transmembrane transport"/>
    <property type="evidence" value="ECO:0007669"/>
    <property type="project" value="TreeGrafter"/>
</dbReference>
<dbReference type="HAMAP" id="MF_00221">
    <property type="entry name" value="NRAMP"/>
    <property type="match status" value="1"/>
</dbReference>
<dbReference type="InterPro" id="IPR001046">
    <property type="entry name" value="NRAMP_fam"/>
</dbReference>
<dbReference type="NCBIfam" id="TIGR01197">
    <property type="entry name" value="nramp"/>
    <property type="match status" value="1"/>
</dbReference>
<dbReference type="NCBIfam" id="NF037982">
    <property type="entry name" value="Nramp_1"/>
    <property type="match status" value="1"/>
</dbReference>
<dbReference type="NCBIfam" id="NF001923">
    <property type="entry name" value="PRK00701.1"/>
    <property type="match status" value="1"/>
</dbReference>
<dbReference type="PANTHER" id="PTHR11706:SF33">
    <property type="entry name" value="NATURAL RESISTANCE-ASSOCIATED MACROPHAGE PROTEIN 2"/>
    <property type="match status" value="1"/>
</dbReference>
<dbReference type="PANTHER" id="PTHR11706">
    <property type="entry name" value="SOLUTE CARRIER PROTEIN FAMILY 11 MEMBER"/>
    <property type="match status" value="1"/>
</dbReference>
<dbReference type="Pfam" id="PF01566">
    <property type="entry name" value="Nramp"/>
    <property type="match status" value="1"/>
</dbReference>
<dbReference type="PRINTS" id="PR00447">
    <property type="entry name" value="NATRESASSCMP"/>
</dbReference>
<reference key="1">
    <citation type="journal article" date="2007" name="PLoS ONE">
        <title>Molecular correlates of host specialization in Staphylococcus aureus.</title>
        <authorList>
            <person name="Herron-Olson L."/>
            <person name="Fitzgerald J.R."/>
            <person name="Musser J.M."/>
            <person name="Kapur V."/>
        </authorList>
    </citation>
    <scope>NUCLEOTIDE SEQUENCE [LARGE SCALE GENOMIC DNA]</scope>
    <source>
        <strain>bovine RF122 / ET3-1</strain>
    </source>
</reference>
<organism>
    <name type="scientific">Staphylococcus aureus (strain bovine RF122 / ET3-1)</name>
    <dbReference type="NCBI Taxonomy" id="273036"/>
    <lineage>
        <taxon>Bacteria</taxon>
        <taxon>Bacillati</taxon>
        <taxon>Bacillota</taxon>
        <taxon>Bacilli</taxon>
        <taxon>Bacillales</taxon>
        <taxon>Staphylococcaceae</taxon>
        <taxon>Staphylococcus</taxon>
    </lineage>
</organism>
<protein>
    <recommendedName>
        <fullName evidence="1">Divalent metal cation transporter MntH</fullName>
    </recommendedName>
</protein>